<proteinExistence type="evidence at protein level"/>
<accession>Q3TVC7</accession>
<accession>Q3UMI3</accession>
<accession>Q61162</accession>
<accession>Q99JA7</accession>
<accession>Q99KG4</accession>
<dbReference type="EMBL" id="U50734">
    <property type="protein sequence ID" value="AAB58118.1"/>
    <property type="status" value="ALT_FRAME"/>
    <property type="molecule type" value="mRNA"/>
</dbReference>
<dbReference type="EMBL" id="AK144883">
    <property type="protein sequence ID" value="BAE26115.1"/>
    <property type="molecule type" value="mRNA"/>
</dbReference>
<dbReference type="EMBL" id="AK154285">
    <property type="protein sequence ID" value="BAE32489.1"/>
    <property type="molecule type" value="mRNA"/>
</dbReference>
<dbReference type="EMBL" id="AK160205">
    <property type="protein sequence ID" value="BAE35692.1"/>
    <property type="molecule type" value="mRNA"/>
</dbReference>
<dbReference type="EMBL" id="AK163150">
    <property type="protein sequence ID" value="BAE37214.1"/>
    <property type="molecule type" value="mRNA"/>
</dbReference>
<dbReference type="EMBL" id="AK167345">
    <property type="protein sequence ID" value="BAE39444.1"/>
    <property type="molecule type" value="mRNA"/>
</dbReference>
<dbReference type="EMBL" id="AL844548">
    <property type="status" value="NOT_ANNOTATED_CDS"/>
    <property type="molecule type" value="Genomic_DNA"/>
</dbReference>
<dbReference type="EMBL" id="BC001984">
    <property type="protein sequence ID" value="AAH01984.2"/>
    <property type="molecule type" value="mRNA"/>
</dbReference>
<dbReference type="EMBL" id="BC004673">
    <property type="protein sequence ID" value="AAH04673.1"/>
    <property type="molecule type" value="mRNA"/>
</dbReference>
<dbReference type="EMBL" id="BC005802">
    <property type="protein sequence ID" value="AAH05802.1"/>
    <property type="molecule type" value="mRNA"/>
</dbReference>
<dbReference type="CCDS" id="CCDS38213.1">
    <molecule id="Q3TVC7-1"/>
</dbReference>
<dbReference type="RefSeq" id="NP_034891.2">
    <molecule id="Q3TVC7-1"/>
    <property type="nucleotide sequence ID" value="NM_010761.3"/>
</dbReference>
<dbReference type="SMR" id="Q3TVC7"/>
<dbReference type="FunCoup" id="Q3TVC7">
    <property type="interactions" value="3335"/>
</dbReference>
<dbReference type="IntAct" id="Q3TVC7">
    <property type="interactions" value="2"/>
</dbReference>
<dbReference type="MINT" id="Q3TVC7"/>
<dbReference type="STRING" id="10090.ENSMUSP00000062496"/>
<dbReference type="PhosphoSitePlus" id="Q3TVC7"/>
<dbReference type="PaxDb" id="10090-ENSMUSP00000062496"/>
<dbReference type="PeptideAtlas" id="Q3TVC7"/>
<dbReference type="ProteomicsDB" id="281322">
    <molecule id="Q3TVC7-1"/>
</dbReference>
<dbReference type="ProteomicsDB" id="281323">
    <molecule id="Q3TVC7-2"/>
</dbReference>
<dbReference type="ProteomicsDB" id="281324">
    <molecule id="Q3TVC7-3"/>
</dbReference>
<dbReference type="Pumba" id="Q3TVC7"/>
<dbReference type="Antibodypedia" id="23815">
    <property type="antibodies" value="250 antibodies from 29 providers"/>
</dbReference>
<dbReference type="DNASU" id="17151"/>
<dbReference type="Ensembl" id="ENSMUST00000060455.15">
    <molecule id="Q3TVC7-1"/>
    <property type="protein sequence ID" value="ENSMUSP00000062496.9"/>
    <property type="gene ID" value="ENSMUSG00000023572.17"/>
</dbReference>
<dbReference type="Ensembl" id="ENSMUST00000099489.9">
    <molecule id="Q3TVC7-2"/>
    <property type="protein sequence ID" value="ENSMUSP00000097088.3"/>
    <property type="gene ID" value="ENSMUSG00000023572.17"/>
</dbReference>
<dbReference type="GeneID" id="17151"/>
<dbReference type="KEGG" id="mmu:17151"/>
<dbReference type="UCSC" id="uc008lxg.1">
    <molecule id="Q3TVC7-1"/>
    <property type="organism name" value="mouse"/>
</dbReference>
<dbReference type="AGR" id="MGI:109595"/>
<dbReference type="CTD" id="23582"/>
<dbReference type="MGI" id="MGI:109595">
    <property type="gene designation" value="Ccndbp1"/>
</dbReference>
<dbReference type="VEuPathDB" id="HostDB:ENSMUSG00000023572"/>
<dbReference type="eggNOG" id="ENOG502SGCW">
    <property type="taxonomic scope" value="Eukaryota"/>
</dbReference>
<dbReference type="GeneTree" id="ENSGT00390000018016"/>
<dbReference type="HOGENOM" id="CLU_067580_0_0_1"/>
<dbReference type="InParanoid" id="Q3TVC7"/>
<dbReference type="OMA" id="HEATKFC"/>
<dbReference type="PhylomeDB" id="Q3TVC7"/>
<dbReference type="TreeFam" id="TF336444"/>
<dbReference type="BioGRID-ORCS" id="17151">
    <property type="hits" value="2 hits in 76 CRISPR screens"/>
</dbReference>
<dbReference type="PRO" id="PR:Q3TVC7"/>
<dbReference type="Proteomes" id="UP000000589">
    <property type="component" value="Chromosome 2"/>
</dbReference>
<dbReference type="RNAct" id="Q3TVC7">
    <property type="molecule type" value="protein"/>
</dbReference>
<dbReference type="Bgee" id="ENSMUSG00000023572">
    <property type="expression patterns" value="Expressed in blood and 256 other cell types or tissues"/>
</dbReference>
<dbReference type="ExpressionAtlas" id="Q3TVC7">
    <property type="expression patterns" value="baseline and differential"/>
</dbReference>
<dbReference type="GO" id="GO:0005737">
    <property type="term" value="C:cytoplasm"/>
    <property type="evidence" value="ECO:0007669"/>
    <property type="project" value="UniProtKB-SubCell"/>
</dbReference>
<dbReference type="GO" id="GO:0016604">
    <property type="term" value="C:nuclear body"/>
    <property type="evidence" value="ECO:0007669"/>
    <property type="project" value="Ensembl"/>
</dbReference>
<dbReference type="GO" id="GO:0005634">
    <property type="term" value="C:nucleus"/>
    <property type="evidence" value="ECO:0000266"/>
    <property type="project" value="MGI"/>
</dbReference>
<dbReference type="FunFam" id="1.20.1410.10:FF:000005">
    <property type="entry name" value="cyclin-D1-binding protein 1"/>
    <property type="match status" value="1"/>
</dbReference>
<dbReference type="FunFam" id="1.20.1420.10:FF:000008">
    <property type="entry name" value="Cyclin-D1-binding protein 1 homolog"/>
    <property type="match status" value="1"/>
</dbReference>
<dbReference type="Gene3D" id="1.20.1410.10">
    <property type="entry name" value="I/LWEQ domain"/>
    <property type="match status" value="1"/>
</dbReference>
<dbReference type="Gene3D" id="1.20.1420.10">
    <property type="entry name" value="Talin, central domain"/>
    <property type="match status" value="1"/>
</dbReference>
<dbReference type="InterPro" id="IPR026907">
    <property type="entry name" value="GCIP-like"/>
</dbReference>
<dbReference type="InterPro" id="IPR049317">
    <property type="entry name" value="GCIP-like_N"/>
</dbReference>
<dbReference type="InterPro" id="IPR049318">
    <property type="entry name" value="GCIP_C"/>
</dbReference>
<dbReference type="PANTHER" id="PTHR15492">
    <property type="entry name" value="CYCLIN D1-BINDING PROTEIN 1"/>
    <property type="match status" value="1"/>
</dbReference>
<dbReference type="PANTHER" id="PTHR15492:SF1">
    <property type="entry name" value="CYCLIN-D1-BINDING PROTEIN 1"/>
    <property type="match status" value="1"/>
</dbReference>
<dbReference type="Pfam" id="PF20936">
    <property type="entry name" value="GCIP_C"/>
    <property type="match status" value="1"/>
</dbReference>
<dbReference type="Pfam" id="PF13324">
    <property type="entry name" value="GCIP_N"/>
    <property type="match status" value="1"/>
</dbReference>
<gene>
    <name type="primary">Ccndbp1</name>
    <name type="synonym">Dip1</name>
    <name type="synonym">Gcip</name>
    <name type="synonym">Maid</name>
</gene>
<protein>
    <recommendedName>
        <fullName>Cyclin-D1-binding protein 1</fullName>
    </recommendedName>
    <alternativeName>
        <fullName>Grap2 and cyclin-D-interacting protein</fullName>
    </alternativeName>
    <alternativeName>
        <fullName>Maternal Id-like protein</fullName>
    </alternativeName>
    <alternativeName>
        <fullName>Stage specific embryonic cDNA-8 protein</fullName>
        <shortName>SSEC-8</shortName>
    </alternativeName>
</protein>
<feature type="initiator methionine" description="Removed" evidence="2">
    <location>
        <position position="1"/>
    </location>
</feature>
<feature type="chain" id="PRO_0000323374" description="Cyclin-D1-binding protein 1">
    <location>
        <begin position="2"/>
        <end position="356"/>
    </location>
</feature>
<feature type="region of interest" description="Required for interaction with CCND1" evidence="1">
    <location>
        <begin position="2"/>
        <end position="205"/>
    </location>
</feature>
<feature type="region of interest" description="Interaction with RPLP0" evidence="1">
    <location>
        <begin position="2"/>
        <end position="187"/>
    </location>
</feature>
<feature type="region of interest" description="Interaction with TCF3" evidence="1">
    <location>
        <begin position="2"/>
        <end position="181"/>
    </location>
</feature>
<feature type="region of interest" description="Interaction with TCF3" evidence="1">
    <location>
        <begin position="147"/>
        <end position="356"/>
    </location>
</feature>
<feature type="region of interest" description="Disordered" evidence="3">
    <location>
        <begin position="198"/>
        <end position="224"/>
    </location>
</feature>
<feature type="region of interest" description="Interaction with RPLP0" evidence="1">
    <location>
        <begin position="236"/>
        <end position="356"/>
    </location>
</feature>
<feature type="modified residue" description="N-acetylalanine" evidence="2">
    <location>
        <position position="2"/>
    </location>
</feature>
<feature type="splice variant" id="VSP_032017" description="In isoform 2." evidence="6 8">
    <location>
        <begin position="1"/>
        <end position="47"/>
    </location>
</feature>
<feature type="splice variant" id="VSP_032018" description="In isoform 3." evidence="7">
    <original>SAKLVSVLIKALEITKASHVSPHPGDSWIPLLINAVDHCMNRIKAL</original>
    <variation>VNVWTLRGSVTLPDYPETVHSLNLELVWQQASPAIALPLCPQRWSNRYTHGHTSFFYVCLGLNSCPYACKHS</variation>
    <location>
        <begin position="304"/>
        <end position="349"/>
    </location>
</feature>
<keyword id="KW-0007">Acetylation</keyword>
<keyword id="KW-0025">Alternative splicing</keyword>
<keyword id="KW-0131">Cell cycle</keyword>
<keyword id="KW-0963">Cytoplasm</keyword>
<keyword id="KW-0539">Nucleus</keyword>
<keyword id="KW-0597">Phosphoprotein</keyword>
<keyword id="KW-1185">Reference proteome</keyword>
<evidence type="ECO:0000250" key="1"/>
<evidence type="ECO:0000250" key="2">
    <source>
        <dbReference type="UniProtKB" id="O95273"/>
    </source>
</evidence>
<evidence type="ECO:0000256" key="3">
    <source>
        <dbReference type="SAM" id="MobiDB-lite"/>
    </source>
</evidence>
<evidence type="ECO:0000269" key="4">
    <source>
    </source>
</evidence>
<evidence type="ECO:0000269" key="5">
    <source>
    </source>
</evidence>
<evidence type="ECO:0000303" key="6">
    <source>
    </source>
</evidence>
<evidence type="ECO:0000303" key="7">
    <source>
    </source>
</evidence>
<evidence type="ECO:0000303" key="8">
    <source>
    </source>
</evidence>
<evidence type="ECO:0000305" key="9"/>
<organism>
    <name type="scientific">Mus musculus</name>
    <name type="common">Mouse</name>
    <dbReference type="NCBI Taxonomy" id="10090"/>
    <lineage>
        <taxon>Eukaryota</taxon>
        <taxon>Metazoa</taxon>
        <taxon>Chordata</taxon>
        <taxon>Craniata</taxon>
        <taxon>Vertebrata</taxon>
        <taxon>Euteleostomi</taxon>
        <taxon>Mammalia</taxon>
        <taxon>Eutheria</taxon>
        <taxon>Euarchontoglires</taxon>
        <taxon>Glires</taxon>
        <taxon>Rodentia</taxon>
        <taxon>Myomorpha</taxon>
        <taxon>Muroidea</taxon>
        <taxon>Muridae</taxon>
        <taxon>Murinae</taxon>
        <taxon>Mus</taxon>
        <taxon>Mus</taxon>
    </lineage>
</organism>
<comment type="function">
    <text evidence="1 4">May negatively regulate cell cycle progression. May act at least in part via inhibition of the cyclin-D1/CDK4 complex, thereby preventing phosphorylation of RB1 and blocking E2F-dependent transcription (By similarity). May be required for hepatocyte proliferation.</text>
</comment>
<comment type="subunit">
    <text evidence="1">Interacts with CCND1 and GRAP2. May also interact with COPS5, RPLP0, SIRT6, SYF2 and TCF3.</text>
</comment>
<comment type="subcellular location">
    <subcellularLocation>
        <location evidence="1">Cytoplasm</location>
    </subcellularLocation>
    <subcellularLocation>
        <location evidence="1">Nucleus</location>
    </subcellularLocation>
</comment>
<comment type="alternative products">
    <event type="alternative splicing"/>
    <isoform>
        <id>Q3TVC7-1</id>
        <name>1</name>
        <sequence type="displayed"/>
    </isoform>
    <isoform>
        <id>Q3TVC7-2</id>
        <name>2</name>
        <sequence type="described" ref="VSP_032017"/>
    </isoform>
    <isoform>
        <id>Q3TVC7-3</id>
        <name>3</name>
        <sequence type="described" ref="VSP_032018"/>
    </isoform>
</comment>
<comment type="tissue specificity">
    <text evidence="5">Expressed at high levels in brain, intestine, muscle and ovary and at lower levels in heart, kidney, liver, lung, spleen and testis.</text>
</comment>
<comment type="developmental stage">
    <text evidence="4 5">Highly expressed in the unfertilized egg. Expression is reduced at the two cell and blastocyst stages. Expressed in the liver, CNS and dorsal root ganglia throughout organogenesis. Also expressed in the intestine, kidney, lung, nasal cavities and thymus from 13 dpc.</text>
</comment>
<comment type="induction">
    <text evidence="4">Expression is induced by partial hepatectomy.</text>
</comment>
<comment type="PTM">
    <text evidence="1">Phosphorylated.</text>
</comment>
<comment type="similarity">
    <text evidence="9">Belongs to the CCNDBP1 family.</text>
</comment>
<comment type="sequence caution" evidence="9">
    <conflict type="frameshift">
        <sequence resource="EMBL-CDS" id="AAB58118"/>
    </conflict>
</comment>
<reference key="1">
    <citation type="journal article" date="1997" name="Dev. Dyn.">
        <title>Maid: a maternally transcribed novel gene encoding a potential negative regulator of bHLH proteins in the mouse egg and zygote.</title>
        <authorList>
            <person name="Hwang S.-Y."/>
            <person name="Oh B."/>
            <person name="Fuechtbauer A."/>
            <person name="Fuechtbauer E.-M."/>
            <person name="Johnson K.R."/>
            <person name="Solter D."/>
            <person name="Knowles B.B."/>
        </authorList>
    </citation>
    <scope>NUCLEOTIDE SEQUENCE [MRNA] (ISOFORM 2)</scope>
    <scope>TISSUE SPECIFICITY</scope>
    <scope>DEVELOPMENTAL STAGE</scope>
    <source>
        <strain>C57BL/6 X DBA/2</strain>
    </source>
</reference>
<reference key="2">
    <citation type="journal article" date="2005" name="Science">
        <title>The transcriptional landscape of the mammalian genome.</title>
        <authorList>
            <person name="Carninci P."/>
            <person name="Kasukawa T."/>
            <person name="Katayama S."/>
            <person name="Gough J."/>
            <person name="Frith M.C."/>
            <person name="Maeda N."/>
            <person name="Oyama R."/>
            <person name="Ravasi T."/>
            <person name="Lenhard B."/>
            <person name="Wells C."/>
            <person name="Kodzius R."/>
            <person name="Shimokawa K."/>
            <person name="Bajic V.B."/>
            <person name="Brenner S.E."/>
            <person name="Batalov S."/>
            <person name="Forrest A.R."/>
            <person name="Zavolan M."/>
            <person name="Davis M.J."/>
            <person name="Wilming L.G."/>
            <person name="Aidinis V."/>
            <person name="Allen J.E."/>
            <person name="Ambesi-Impiombato A."/>
            <person name="Apweiler R."/>
            <person name="Aturaliya R.N."/>
            <person name="Bailey T.L."/>
            <person name="Bansal M."/>
            <person name="Baxter L."/>
            <person name="Beisel K.W."/>
            <person name="Bersano T."/>
            <person name="Bono H."/>
            <person name="Chalk A.M."/>
            <person name="Chiu K.P."/>
            <person name="Choudhary V."/>
            <person name="Christoffels A."/>
            <person name="Clutterbuck D.R."/>
            <person name="Crowe M.L."/>
            <person name="Dalla E."/>
            <person name="Dalrymple B.P."/>
            <person name="de Bono B."/>
            <person name="Della Gatta G."/>
            <person name="di Bernardo D."/>
            <person name="Down T."/>
            <person name="Engstrom P."/>
            <person name="Fagiolini M."/>
            <person name="Faulkner G."/>
            <person name="Fletcher C.F."/>
            <person name="Fukushima T."/>
            <person name="Furuno M."/>
            <person name="Futaki S."/>
            <person name="Gariboldi M."/>
            <person name="Georgii-Hemming P."/>
            <person name="Gingeras T.R."/>
            <person name="Gojobori T."/>
            <person name="Green R.E."/>
            <person name="Gustincich S."/>
            <person name="Harbers M."/>
            <person name="Hayashi Y."/>
            <person name="Hensch T.K."/>
            <person name="Hirokawa N."/>
            <person name="Hill D."/>
            <person name="Huminiecki L."/>
            <person name="Iacono M."/>
            <person name="Ikeo K."/>
            <person name="Iwama A."/>
            <person name="Ishikawa T."/>
            <person name="Jakt M."/>
            <person name="Kanapin A."/>
            <person name="Katoh M."/>
            <person name="Kawasawa Y."/>
            <person name="Kelso J."/>
            <person name="Kitamura H."/>
            <person name="Kitano H."/>
            <person name="Kollias G."/>
            <person name="Krishnan S.P."/>
            <person name="Kruger A."/>
            <person name="Kummerfeld S.K."/>
            <person name="Kurochkin I.V."/>
            <person name="Lareau L.F."/>
            <person name="Lazarevic D."/>
            <person name="Lipovich L."/>
            <person name="Liu J."/>
            <person name="Liuni S."/>
            <person name="McWilliam S."/>
            <person name="Madan Babu M."/>
            <person name="Madera M."/>
            <person name="Marchionni L."/>
            <person name="Matsuda H."/>
            <person name="Matsuzawa S."/>
            <person name="Miki H."/>
            <person name="Mignone F."/>
            <person name="Miyake S."/>
            <person name="Morris K."/>
            <person name="Mottagui-Tabar S."/>
            <person name="Mulder N."/>
            <person name="Nakano N."/>
            <person name="Nakauchi H."/>
            <person name="Ng P."/>
            <person name="Nilsson R."/>
            <person name="Nishiguchi S."/>
            <person name="Nishikawa S."/>
            <person name="Nori F."/>
            <person name="Ohara O."/>
            <person name="Okazaki Y."/>
            <person name="Orlando V."/>
            <person name="Pang K.C."/>
            <person name="Pavan W.J."/>
            <person name="Pavesi G."/>
            <person name="Pesole G."/>
            <person name="Petrovsky N."/>
            <person name="Piazza S."/>
            <person name="Reed J."/>
            <person name="Reid J.F."/>
            <person name="Ring B.Z."/>
            <person name="Ringwald M."/>
            <person name="Rost B."/>
            <person name="Ruan Y."/>
            <person name="Salzberg S.L."/>
            <person name="Sandelin A."/>
            <person name="Schneider C."/>
            <person name="Schoenbach C."/>
            <person name="Sekiguchi K."/>
            <person name="Semple C.A."/>
            <person name="Seno S."/>
            <person name="Sessa L."/>
            <person name="Sheng Y."/>
            <person name="Shibata Y."/>
            <person name="Shimada H."/>
            <person name="Shimada K."/>
            <person name="Silva D."/>
            <person name="Sinclair B."/>
            <person name="Sperling S."/>
            <person name="Stupka E."/>
            <person name="Sugiura K."/>
            <person name="Sultana R."/>
            <person name="Takenaka Y."/>
            <person name="Taki K."/>
            <person name="Tammoja K."/>
            <person name="Tan S.L."/>
            <person name="Tang S."/>
            <person name="Taylor M.S."/>
            <person name="Tegner J."/>
            <person name="Teichmann S.A."/>
            <person name="Ueda H.R."/>
            <person name="van Nimwegen E."/>
            <person name="Verardo R."/>
            <person name="Wei C.L."/>
            <person name="Yagi K."/>
            <person name="Yamanishi H."/>
            <person name="Zabarovsky E."/>
            <person name="Zhu S."/>
            <person name="Zimmer A."/>
            <person name="Hide W."/>
            <person name="Bult C."/>
            <person name="Grimmond S.M."/>
            <person name="Teasdale R.D."/>
            <person name="Liu E.T."/>
            <person name="Brusic V."/>
            <person name="Quackenbush J."/>
            <person name="Wahlestedt C."/>
            <person name="Mattick J.S."/>
            <person name="Hume D.A."/>
            <person name="Kai C."/>
            <person name="Sasaki D."/>
            <person name="Tomaru Y."/>
            <person name="Fukuda S."/>
            <person name="Kanamori-Katayama M."/>
            <person name="Suzuki M."/>
            <person name="Aoki J."/>
            <person name="Arakawa T."/>
            <person name="Iida J."/>
            <person name="Imamura K."/>
            <person name="Itoh M."/>
            <person name="Kato T."/>
            <person name="Kawaji H."/>
            <person name="Kawagashira N."/>
            <person name="Kawashima T."/>
            <person name="Kojima M."/>
            <person name="Kondo S."/>
            <person name="Konno H."/>
            <person name="Nakano K."/>
            <person name="Ninomiya N."/>
            <person name="Nishio T."/>
            <person name="Okada M."/>
            <person name="Plessy C."/>
            <person name="Shibata K."/>
            <person name="Shiraki T."/>
            <person name="Suzuki S."/>
            <person name="Tagami M."/>
            <person name="Waki K."/>
            <person name="Watahiki A."/>
            <person name="Okamura-Oho Y."/>
            <person name="Suzuki H."/>
            <person name="Kawai J."/>
            <person name="Hayashizaki Y."/>
        </authorList>
    </citation>
    <scope>NUCLEOTIDE SEQUENCE [LARGE SCALE MRNA] (ISOFORMS 1 AND 3)</scope>
    <source>
        <strain>C57BL/6J</strain>
        <strain>NOD</strain>
        <tissue>Cerebellum</tissue>
        <tissue>Dendritic cell</tissue>
        <tissue>Embryo</tissue>
        <tissue>Lung</tissue>
        <tissue>Placenta</tissue>
    </source>
</reference>
<reference key="3">
    <citation type="journal article" date="2009" name="PLoS Biol.">
        <title>Lineage-specific biology revealed by a finished genome assembly of the mouse.</title>
        <authorList>
            <person name="Church D.M."/>
            <person name="Goodstadt L."/>
            <person name="Hillier L.W."/>
            <person name="Zody M.C."/>
            <person name="Goldstein S."/>
            <person name="She X."/>
            <person name="Bult C.J."/>
            <person name="Agarwala R."/>
            <person name="Cherry J.L."/>
            <person name="DiCuccio M."/>
            <person name="Hlavina W."/>
            <person name="Kapustin Y."/>
            <person name="Meric P."/>
            <person name="Maglott D."/>
            <person name="Birtle Z."/>
            <person name="Marques A.C."/>
            <person name="Graves T."/>
            <person name="Zhou S."/>
            <person name="Teague B."/>
            <person name="Potamousis K."/>
            <person name="Churas C."/>
            <person name="Place M."/>
            <person name="Herschleb J."/>
            <person name="Runnheim R."/>
            <person name="Forrest D."/>
            <person name="Amos-Landgraf J."/>
            <person name="Schwartz D.C."/>
            <person name="Cheng Z."/>
            <person name="Lindblad-Toh K."/>
            <person name="Eichler E.E."/>
            <person name="Ponting C.P."/>
        </authorList>
    </citation>
    <scope>NUCLEOTIDE SEQUENCE [LARGE SCALE GENOMIC DNA]</scope>
    <source>
        <strain>C57BL/6J</strain>
    </source>
</reference>
<reference key="4">
    <citation type="journal article" date="2004" name="Genome Res.">
        <title>The status, quality, and expansion of the NIH full-length cDNA project: the Mammalian Gene Collection (MGC).</title>
        <authorList>
            <consortium name="The MGC Project Team"/>
        </authorList>
    </citation>
    <scope>NUCLEOTIDE SEQUENCE [LARGE SCALE MRNA] (ISOFORMS 1 AND 2)</scope>
    <source>
        <strain>FVB/N</strain>
        <tissue>Mammary tumor</tissue>
    </source>
</reference>
<reference key="5">
    <citation type="journal article" date="2007" name="Hepatology">
        <title>Maid (GCIP) is involved in cell cycle control of hepatocytes.</title>
        <authorList>
            <person name="Sonnenberg-Riethmacher E."/>
            <person name="Wuestefeld T."/>
            <person name="Miehe M."/>
            <person name="Trautwein C."/>
            <person name="Riethmacher D."/>
        </authorList>
    </citation>
    <scope>FUNCTION</scope>
    <scope>DEVELOPMENTAL STAGE</scope>
    <scope>INDUCTION</scope>
</reference>
<reference key="6">
    <citation type="journal article" date="2010" name="Cell">
        <title>A tissue-specific atlas of mouse protein phosphorylation and expression.</title>
        <authorList>
            <person name="Huttlin E.L."/>
            <person name="Jedrychowski M.P."/>
            <person name="Elias J.E."/>
            <person name="Goswami T."/>
            <person name="Rad R."/>
            <person name="Beausoleil S.A."/>
            <person name="Villen J."/>
            <person name="Haas W."/>
            <person name="Sowa M.E."/>
            <person name="Gygi S.P."/>
        </authorList>
    </citation>
    <scope>IDENTIFICATION BY MASS SPECTROMETRY [LARGE SCALE ANALYSIS]</scope>
    <source>
        <tissue>Spleen</tissue>
    </source>
</reference>
<sequence length="356" mass="39356">MASSTAAVPFLAPPLEQLRHLAEELRSLLPRVRVGEAQETAEEFNREMFWRRLNEAAVKVNGEATVLTTHFSKLPWPSPQETQRICEQVRIAIEEIIIVYYSLPKDQGITLRKLVRNAALDIVDGMAQLLEVLLTAPSQSTENGDLISCNSVSVACQQVPEIPKDNKAAALLMLTKSVDFVKDAHEEMEQAVEECDPYSGLLNDSEDNSDSHSDEDGVLGLPSNRDSYWSEEDQELIIPCLALVRASRASLKKIRILVAENGKKDEVAQLDDIVDISDEISPSVDDLVLSIYPPVCHLTVRISSAKLVSVLIKALEITKASHVSPHPGDSWIPLLINAVDHCMNRIKALTQRAAEL</sequence>
<name>CCDB1_MOUSE</name>